<proteinExistence type="inferred from homology"/>
<reference key="1">
    <citation type="journal article" date="2006" name="Proc. Natl. Acad. Sci. U.S.A.">
        <title>Identification of genes subject to positive selection in uropathogenic strains of Escherichia coli: a comparative genomics approach.</title>
        <authorList>
            <person name="Chen S.L."/>
            <person name="Hung C.-S."/>
            <person name="Xu J."/>
            <person name="Reigstad C.S."/>
            <person name="Magrini V."/>
            <person name="Sabo A."/>
            <person name="Blasiar D."/>
            <person name="Bieri T."/>
            <person name="Meyer R.R."/>
            <person name="Ozersky P."/>
            <person name="Armstrong J.R."/>
            <person name="Fulton R.S."/>
            <person name="Latreille J.P."/>
            <person name="Spieth J."/>
            <person name="Hooton T.M."/>
            <person name="Mardis E.R."/>
            <person name="Hultgren S.J."/>
            <person name="Gordon J.I."/>
        </authorList>
    </citation>
    <scope>NUCLEOTIDE SEQUENCE [LARGE SCALE GENOMIC DNA]</scope>
    <source>
        <strain>UTI89 / UPEC</strain>
    </source>
</reference>
<protein>
    <recommendedName>
        <fullName evidence="1">Ribosomal RNA small subunit methyltransferase G</fullName>
        <ecNumber evidence="1">2.1.1.170</ecNumber>
    </recommendedName>
    <alternativeName>
        <fullName evidence="1">16S rRNA 7-methylguanosine methyltransferase</fullName>
        <shortName evidence="1">16S rRNA m7G methyltransferase</shortName>
    </alternativeName>
</protein>
<feature type="chain" id="PRO_1000010142" description="Ribosomal RNA small subunit methyltransferase G">
    <location>
        <begin position="1"/>
        <end position="207"/>
    </location>
</feature>
<feature type="binding site" evidence="1">
    <location>
        <position position="73"/>
    </location>
    <ligand>
        <name>S-adenosyl-L-methionine</name>
        <dbReference type="ChEBI" id="CHEBI:59789"/>
    </ligand>
</feature>
<feature type="binding site" evidence="1">
    <location>
        <position position="78"/>
    </location>
    <ligand>
        <name>S-adenosyl-L-methionine</name>
        <dbReference type="ChEBI" id="CHEBI:59789"/>
    </ligand>
</feature>
<feature type="binding site" evidence="1">
    <location>
        <begin position="124"/>
        <end position="125"/>
    </location>
    <ligand>
        <name>S-adenosyl-L-methionine</name>
        <dbReference type="ChEBI" id="CHEBI:59789"/>
    </ligand>
</feature>
<feature type="binding site" evidence="1">
    <location>
        <position position="139"/>
    </location>
    <ligand>
        <name>S-adenosyl-L-methionine</name>
        <dbReference type="ChEBI" id="CHEBI:59789"/>
    </ligand>
</feature>
<evidence type="ECO:0000255" key="1">
    <source>
        <dbReference type="HAMAP-Rule" id="MF_00074"/>
    </source>
</evidence>
<accession>Q1R4J2</accession>
<comment type="function">
    <text evidence="1">Specifically methylates the N7 position of guanine in position 527 of 16S rRNA.</text>
</comment>
<comment type="catalytic activity">
    <reaction evidence="1">
        <text>guanosine(527) in 16S rRNA + S-adenosyl-L-methionine = N(7)-methylguanosine(527) in 16S rRNA + S-adenosyl-L-homocysteine</text>
        <dbReference type="Rhea" id="RHEA:42732"/>
        <dbReference type="Rhea" id="RHEA-COMP:10209"/>
        <dbReference type="Rhea" id="RHEA-COMP:10210"/>
        <dbReference type="ChEBI" id="CHEBI:57856"/>
        <dbReference type="ChEBI" id="CHEBI:59789"/>
        <dbReference type="ChEBI" id="CHEBI:74269"/>
        <dbReference type="ChEBI" id="CHEBI:74480"/>
        <dbReference type="EC" id="2.1.1.170"/>
    </reaction>
</comment>
<comment type="subcellular location">
    <subcellularLocation>
        <location evidence="1">Cytoplasm</location>
    </subcellularLocation>
</comment>
<comment type="similarity">
    <text evidence="1">Belongs to the methyltransferase superfamily. RNA methyltransferase RsmG family.</text>
</comment>
<keyword id="KW-0963">Cytoplasm</keyword>
<keyword id="KW-0489">Methyltransferase</keyword>
<keyword id="KW-0698">rRNA processing</keyword>
<keyword id="KW-0949">S-adenosyl-L-methionine</keyword>
<keyword id="KW-0808">Transferase</keyword>
<organism>
    <name type="scientific">Escherichia coli (strain UTI89 / UPEC)</name>
    <dbReference type="NCBI Taxonomy" id="364106"/>
    <lineage>
        <taxon>Bacteria</taxon>
        <taxon>Pseudomonadati</taxon>
        <taxon>Pseudomonadota</taxon>
        <taxon>Gammaproteobacteria</taxon>
        <taxon>Enterobacterales</taxon>
        <taxon>Enterobacteriaceae</taxon>
        <taxon>Escherichia</taxon>
    </lineage>
</organism>
<sequence length="207" mass="23431">MLNKLSLLLKDAGISLTDHQKNQLIAYVNMLHKWNKAYNLTSVRDPNEMLVRHILDSIVVAPYLQGERFIDVGTGPGLPGIPLSIVRPEAHFTLLDSLGKRVRFLRQVQHELKLENIEPVQSRVEEFPSEPPFDGVISRAFASLNDMVSWCHHLPGEQGRFYALKGQMPEDEIALLPEEYQVESVVKLQVPALDGERHLVVIKANKI</sequence>
<name>RSMG_ECOUT</name>
<dbReference type="EC" id="2.1.1.170" evidence="1"/>
<dbReference type="EMBL" id="CP000243">
    <property type="protein sequence ID" value="ABE09722.1"/>
    <property type="molecule type" value="Genomic_DNA"/>
</dbReference>
<dbReference type="RefSeq" id="WP_000932839.1">
    <property type="nucleotide sequence ID" value="NZ_CP064825.1"/>
</dbReference>
<dbReference type="SMR" id="Q1R4J2"/>
<dbReference type="GeneID" id="93778227"/>
<dbReference type="KEGG" id="eci:UTI89_C4295"/>
<dbReference type="HOGENOM" id="CLU_065341_2_2_6"/>
<dbReference type="Proteomes" id="UP000001952">
    <property type="component" value="Chromosome"/>
</dbReference>
<dbReference type="GO" id="GO:0005829">
    <property type="term" value="C:cytosol"/>
    <property type="evidence" value="ECO:0007669"/>
    <property type="project" value="TreeGrafter"/>
</dbReference>
<dbReference type="GO" id="GO:0070043">
    <property type="term" value="F:rRNA (guanine-N7-)-methyltransferase activity"/>
    <property type="evidence" value="ECO:0007669"/>
    <property type="project" value="UniProtKB-UniRule"/>
</dbReference>
<dbReference type="CDD" id="cd02440">
    <property type="entry name" value="AdoMet_MTases"/>
    <property type="match status" value="1"/>
</dbReference>
<dbReference type="FunFam" id="3.40.50.150:FF:000032">
    <property type="entry name" value="Ribosomal RNA small subunit methyltransferase G"/>
    <property type="match status" value="1"/>
</dbReference>
<dbReference type="Gene3D" id="3.40.50.150">
    <property type="entry name" value="Vaccinia Virus protein VP39"/>
    <property type="match status" value="1"/>
</dbReference>
<dbReference type="HAMAP" id="MF_00074">
    <property type="entry name" value="16SrRNA_methyltr_G"/>
    <property type="match status" value="1"/>
</dbReference>
<dbReference type="InterPro" id="IPR003682">
    <property type="entry name" value="rRNA_ssu_MeTfrase_G"/>
</dbReference>
<dbReference type="InterPro" id="IPR029063">
    <property type="entry name" value="SAM-dependent_MTases_sf"/>
</dbReference>
<dbReference type="NCBIfam" id="TIGR00138">
    <property type="entry name" value="rsmG_gidB"/>
    <property type="match status" value="1"/>
</dbReference>
<dbReference type="PANTHER" id="PTHR31760">
    <property type="entry name" value="S-ADENOSYL-L-METHIONINE-DEPENDENT METHYLTRANSFERASES SUPERFAMILY PROTEIN"/>
    <property type="match status" value="1"/>
</dbReference>
<dbReference type="PANTHER" id="PTHR31760:SF0">
    <property type="entry name" value="S-ADENOSYL-L-METHIONINE-DEPENDENT METHYLTRANSFERASES SUPERFAMILY PROTEIN"/>
    <property type="match status" value="1"/>
</dbReference>
<dbReference type="Pfam" id="PF02527">
    <property type="entry name" value="GidB"/>
    <property type="match status" value="1"/>
</dbReference>
<dbReference type="PIRSF" id="PIRSF003078">
    <property type="entry name" value="GidB"/>
    <property type="match status" value="1"/>
</dbReference>
<dbReference type="SUPFAM" id="SSF53335">
    <property type="entry name" value="S-adenosyl-L-methionine-dependent methyltransferases"/>
    <property type="match status" value="1"/>
</dbReference>
<gene>
    <name evidence="1" type="primary">rsmG</name>
    <name type="ordered locus">UTI89_C4295</name>
</gene>